<evidence type="ECO:0000255" key="1">
    <source>
        <dbReference type="PROSITE-ProRule" id="PRU00981"/>
    </source>
</evidence>
<evidence type="ECO:0000269" key="2">
    <source>
    </source>
</evidence>
<evidence type="ECO:0000269" key="3">
    <source>
    </source>
</evidence>
<accession>Q11094</accession>
<accession>O76255</accession>
<keyword id="KW-0010">Activator</keyword>
<keyword id="KW-0217">Developmental protein</keyword>
<keyword id="KW-0221">Differentiation</keyword>
<keyword id="KW-0238">DNA-binding</keyword>
<keyword id="KW-0539">Nucleus</keyword>
<keyword id="KW-1185">Reference proteome</keyword>
<keyword id="KW-0804">Transcription</keyword>
<keyword id="KW-0805">Transcription regulation</keyword>
<comment type="function">
    <text evidence="2 3">Acts as a transcriptional regulator. Involved in postembryonic mesodermal cell fate specification. Activates ceh-24 and egl-15 during mesodermal patterning.</text>
</comment>
<comment type="subunit">
    <text evidence="3">Efficient DNA binding requires dimerization with another bHLH protein. Homodimer. Forms a heterodimer with hlh-2.</text>
</comment>
<comment type="subcellular location">
    <subcellularLocation>
        <location evidence="1">Nucleus</location>
    </subcellularLocation>
</comment>
<comment type="tissue specificity">
    <text evidence="3">Expressed in defecation-associated muscles and neuron-like cells in the head at the L1 stage. In later larvae, expressed in SM cells and their descendants. Not expressed in differentiated body wall or sex muscles.</text>
</comment>
<dbReference type="EMBL" id="AF037063">
    <property type="protein sequence ID" value="AAC26105.1"/>
    <property type="molecule type" value="mRNA"/>
</dbReference>
<dbReference type="EMBL" id="FO080272">
    <property type="protein sequence ID" value="CCD62506.1"/>
    <property type="molecule type" value="Genomic_DNA"/>
</dbReference>
<dbReference type="PIR" id="T15373">
    <property type="entry name" value="T15373"/>
</dbReference>
<dbReference type="PIR" id="T42395">
    <property type="entry name" value="T42395"/>
</dbReference>
<dbReference type="RefSeq" id="NP_509367.1">
    <property type="nucleotide sequence ID" value="NM_076966.3"/>
</dbReference>
<dbReference type="SMR" id="Q11094"/>
<dbReference type="BioGRID" id="45992">
    <property type="interactions" value="5"/>
</dbReference>
<dbReference type="FunCoup" id="Q11094">
    <property type="interactions" value="147"/>
</dbReference>
<dbReference type="IntAct" id="Q11094">
    <property type="interactions" value="3"/>
</dbReference>
<dbReference type="STRING" id="6239.C02B8.4.1"/>
<dbReference type="PaxDb" id="6239-C02B8.4"/>
<dbReference type="EnsemblMetazoa" id="C02B8.4.1">
    <property type="protein sequence ID" value="C02B8.4.1"/>
    <property type="gene ID" value="WBGene00001953"/>
</dbReference>
<dbReference type="EnsemblMetazoa" id="C02B8.4.2">
    <property type="protein sequence ID" value="C02B8.4.2"/>
    <property type="gene ID" value="WBGene00001953"/>
</dbReference>
<dbReference type="GeneID" id="181069"/>
<dbReference type="KEGG" id="cel:CELE_C02B8.4"/>
<dbReference type="UCSC" id="C02B8.4">
    <property type="organism name" value="c. elegans"/>
</dbReference>
<dbReference type="AGR" id="WB:WBGene00001953"/>
<dbReference type="CTD" id="181069"/>
<dbReference type="WormBase" id="C02B8.4">
    <property type="protein sequence ID" value="CE24777"/>
    <property type="gene ID" value="WBGene00001953"/>
    <property type="gene designation" value="hlh-8"/>
</dbReference>
<dbReference type="eggNOG" id="KOG4447">
    <property type="taxonomic scope" value="Eukaryota"/>
</dbReference>
<dbReference type="GeneTree" id="ENSGT00940000172846"/>
<dbReference type="HOGENOM" id="CLU_1511964_0_0_1"/>
<dbReference type="InParanoid" id="Q11094"/>
<dbReference type="OMA" id="VCANKRE"/>
<dbReference type="OrthoDB" id="8583783at2759"/>
<dbReference type="PhylomeDB" id="Q11094"/>
<dbReference type="PRO" id="PR:Q11094"/>
<dbReference type="Proteomes" id="UP000001940">
    <property type="component" value="Chromosome X"/>
</dbReference>
<dbReference type="Bgee" id="WBGene00001953">
    <property type="expression patterns" value="Expressed in larva and 4 other cell types or tissues"/>
</dbReference>
<dbReference type="GO" id="GO:0005634">
    <property type="term" value="C:nucleus"/>
    <property type="evidence" value="ECO:0000305"/>
    <property type="project" value="UniProtKB"/>
</dbReference>
<dbReference type="GO" id="GO:0000981">
    <property type="term" value="F:DNA-binding transcription factor activity, RNA polymerase II-specific"/>
    <property type="evidence" value="ECO:0000318"/>
    <property type="project" value="GO_Central"/>
</dbReference>
<dbReference type="GO" id="GO:0046983">
    <property type="term" value="F:protein dimerization activity"/>
    <property type="evidence" value="ECO:0007669"/>
    <property type="project" value="InterPro"/>
</dbReference>
<dbReference type="GO" id="GO:0000977">
    <property type="term" value="F:RNA polymerase II transcription regulatory region sequence-specific DNA binding"/>
    <property type="evidence" value="ECO:0000318"/>
    <property type="project" value="GO_Central"/>
</dbReference>
<dbReference type="GO" id="GO:0032502">
    <property type="term" value="P:developmental process"/>
    <property type="evidence" value="ECO:0000318"/>
    <property type="project" value="GO_Central"/>
</dbReference>
<dbReference type="GO" id="GO:0007501">
    <property type="term" value="P:mesodermal cell fate specification"/>
    <property type="evidence" value="ECO:0000314"/>
    <property type="project" value="UniProtKB"/>
</dbReference>
<dbReference type="GO" id="GO:0045893">
    <property type="term" value="P:positive regulation of DNA-templated transcription"/>
    <property type="evidence" value="ECO:0000315"/>
    <property type="project" value="UniProtKB"/>
</dbReference>
<dbReference type="GO" id="GO:0045944">
    <property type="term" value="P:positive regulation of transcription by RNA polymerase II"/>
    <property type="evidence" value="ECO:0000316"/>
    <property type="project" value="WormBase"/>
</dbReference>
<dbReference type="GO" id="GO:0006357">
    <property type="term" value="P:regulation of transcription by RNA polymerase II"/>
    <property type="evidence" value="ECO:0000315"/>
    <property type="project" value="UniProtKB"/>
</dbReference>
<dbReference type="GO" id="GO:0072327">
    <property type="term" value="P:vulval cell fate specification"/>
    <property type="evidence" value="ECO:0000315"/>
    <property type="project" value="UniProtKB"/>
</dbReference>
<dbReference type="CDD" id="cd11464">
    <property type="entry name" value="bHLH_TS_TWIST"/>
    <property type="match status" value="1"/>
</dbReference>
<dbReference type="Gene3D" id="4.10.280.10">
    <property type="entry name" value="Helix-loop-helix DNA-binding domain"/>
    <property type="match status" value="1"/>
</dbReference>
<dbReference type="InterPro" id="IPR011598">
    <property type="entry name" value="bHLH_dom"/>
</dbReference>
<dbReference type="InterPro" id="IPR050283">
    <property type="entry name" value="E-box_TF_Regulators"/>
</dbReference>
<dbReference type="InterPro" id="IPR036638">
    <property type="entry name" value="HLH_DNA-bd_sf"/>
</dbReference>
<dbReference type="InterPro" id="IPR015789">
    <property type="entry name" value="Twist-rel_bHLH"/>
</dbReference>
<dbReference type="PANTHER" id="PTHR23349">
    <property type="entry name" value="BASIC HELIX-LOOP-HELIX TRANSCRIPTION FACTOR, TWIST"/>
    <property type="match status" value="1"/>
</dbReference>
<dbReference type="PANTHER" id="PTHR23349:SF50">
    <property type="entry name" value="PROTEIN TWIST"/>
    <property type="match status" value="1"/>
</dbReference>
<dbReference type="Pfam" id="PF00010">
    <property type="entry name" value="HLH"/>
    <property type="match status" value="1"/>
</dbReference>
<dbReference type="SMART" id="SM00353">
    <property type="entry name" value="HLH"/>
    <property type="match status" value="1"/>
</dbReference>
<dbReference type="SUPFAM" id="SSF47459">
    <property type="entry name" value="HLH, helix-loop-helix DNA-binding domain"/>
    <property type="match status" value="1"/>
</dbReference>
<dbReference type="PROSITE" id="PS50888">
    <property type="entry name" value="BHLH"/>
    <property type="match status" value="1"/>
</dbReference>
<proteinExistence type="evidence at protein level"/>
<reference key="1">
    <citation type="journal article" date="1998" name="Genes Dev.">
        <title>Analysis of a Caenorhabditis elegans Twist homolog identifies conserved and divergent aspects of mesodermal patterning.</title>
        <authorList>
            <person name="Harfe B.D."/>
            <person name="Vaz Gomes A."/>
            <person name="Kenyon C."/>
            <person name="Liu J."/>
            <person name="Krause M."/>
            <person name="Fire A."/>
        </authorList>
    </citation>
    <scope>NUCLEOTIDE SEQUENCE [MRNA]</scope>
    <scope>FUNCTION</scope>
    <scope>TISSUE SPECIFICITY</scope>
    <scope>SUBUNIT</scope>
</reference>
<reference key="2">
    <citation type="journal article" date="1998" name="Science">
        <title>Genome sequence of the nematode C. elegans: a platform for investigating biology.</title>
        <authorList>
            <consortium name="The C. elegans sequencing consortium"/>
        </authorList>
    </citation>
    <scope>NUCLEOTIDE SEQUENCE [LARGE SCALE GENOMIC DNA]</scope>
    <source>
        <strain>Bristol N2</strain>
    </source>
</reference>
<reference key="3">
    <citation type="journal article" date="2017" name="Hum. Mol. Genet.">
        <title>Localized TWIST1 and TWIST2 basic domain substitutions cause four distinct human diseases that can be modeled in Caenorhabditis elegans.</title>
        <authorList>
            <person name="Kim S."/>
            <person name="Twigg S.R.F."/>
            <person name="Scanlon V.A."/>
            <person name="Chandra A."/>
            <person name="Hansen T.J."/>
            <person name="Alsubait A."/>
            <person name="Fenwick A.L."/>
            <person name="McGowan S.J."/>
            <person name="Lord H."/>
            <person name="Lester T."/>
            <person name="Sweeney E."/>
            <person name="Weber A."/>
            <person name="Cox H."/>
            <person name="Wilkie A.O.M."/>
            <person name="Golden A."/>
            <person name="Corsi A.K."/>
        </authorList>
    </citation>
    <scope>FUNCTION</scope>
    <scope>MUTAGENESIS OF ARG-28</scope>
    <scope>MUTAGENESIS OF GLU-29</scope>
</reference>
<feature type="chain" id="PRO_0000127494" description="Twist-related protein">
    <location>
        <begin position="1"/>
        <end position="178"/>
    </location>
</feature>
<feature type="domain" description="bHLH" evidence="1">
    <location>
        <begin position="20"/>
        <end position="71"/>
    </location>
</feature>
<feature type="mutagenesis site" description="Impaired vulval muscles development." evidence="2">
    <original>R</original>
    <variation>G</variation>
    <location>
        <position position="28"/>
    </location>
</feature>
<feature type="mutagenesis site" description="No effect on vulval muscles development. Decreased brood size." evidence="2">
    <original>R</original>
    <variation>L</variation>
    <location>
        <position position="28"/>
    </location>
</feature>
<feature type="mutagenesis site" description="Impaired vulval muscles development." evidence="2">
    <original>R</original>
    <variation>W</variation>
    <location>
        <position position="28"/>
    </location>
</feature>
<feature type="mutagenesis site" description="Dominant negative effect on function in transcription regulation and mesodermal cells fate specification. Delayed development. Impaired vulval and non-striated enteric muscles development." evidence="2">
    <original>E</original>
    <variation>A</variation>
    <location>
        <position position="29"/>
    </location>
</feature>
<feature type="mutagenesis site" description="Dominant negative effect on function in transcription regulation and mesodermal cells fate specification. Delayed development. Impaired vulval and non-striated enteric muscles development." evidence="2">
    <original>E</original>
    <variation>D</variation>
    <location>
        <position position="29"/>
    </location>
</feature>
<feature type="mutagenesis site" description="Dominant negative effect on function in transcription regulation and mesodermal cells fate specification. Impaired vulval and non-striated enteric muscles development." evidence="2">
    <original>E</original>
    <variation>G</variation>
    <location>
        <position position="29"/>
    </location>
</feature>
<feature type="mutagenesis site" description="Dominant negative effect on function in transcription regulation and mesodermal cells fate specification. Delayed development. Impaired vulval and non-striated enteric muscles development." evidence="2">
    <original>E</original>
    <variation>K</variation>
    <location>
        <position position="29"/>
    </location>
</feature>
<feature type="mutagenesis site" description="Dominant negative effect on function in transcription regulation and mesodermal cells fate specification. Impaired vulval muscles development." evidence="2">
    <original>E</original>
    <variation>Q</variation>
    <location>
        <position position="29"/>
    </location>
</feature>
<feature type="mutagenesis site" description="Dominant negative effect on function in transcription regulation and mesodermal cells fate specification. Delayed development. Impaired vulval and non-striated enteric muscles development." evidence="2">
    <original>E</original>
    <variation>V</variation>
    <location>
        <position position="29"/>
    </location>
</feature>
<organism>
    <name type="scientific">Caenorhabditis elegans</name>
    <dbReference type="NCBI Taxonomy" id="6239"/>
    <lineage>
        <taxon>Eukaryota</taxon>
        <taxon>Metazoa</taxon>
        <taxon>Ecdysozoa</taxon>
        <taxon>Nematoda</taxon>
        <taxon>Chromadorea</taxon>
        <taxon>Rhabditida</taxon>
        <taxon>Rhabditina</taxon>
        <taxon>Rhabditomorpha</taxon>
        <taxon>Rhabditoidea</taxon>
        <taxon>Rhabditidae</taxon>
        <taxon>Peloderinae</taxon>
        <taxon>Caenorhabditis</taxon>
    </lineage>
</organism>
<gene>
    <name type="primary">hlh-8</name>
    <name type="ORF">C02B8.4</name>
</gene>
<sequence length="178" mass="20452">MVARRKGERVVRKNEVENVQQRACANRRERQRTKELNDAFTLLRKLIPSMPSDKMSKIHTLRIATDYISFLDEMQKNGCKLYGHSIFDEKRGYNLQSAFNMWRGNNGYTPIAGPSQLPPLQSAHIPPPAPSSIPPHCLMPQPWYQTCPPPKQEFHELCPISTPNPNSNPNQLTPIHWQ</sequence>
<name>TWIST_CAEEL</name>
<protein>
    <recommendedName>
        <fullName>Twist-related protein</fullName>
    </recommendedName>
    <alternativeName>
        <fullName>CeTwist</fullName>
    </alternativeName>
    <alternativeName>
        <fullName>Helix-loop-helix protein 8</fullName>
    </alternativeName>
</protein>